<organism>
    <name type="scientific">Zobellia galactanivorans (strain DSM 12802 / CCUG 47099 / CIP 106680 / NCIMB 13871 / Dsij)</name>
    <dbReference type="NCBI Taxonomy" id="63186"/>
    <lineage>
        <taxon>Bacteria</taxon>
        <taxon>Pseudomonadati</taxon>
        <taxon>Bacteroidota</taxon>
        <taxon>Flavobacteriia</taxon>
        <taxon>Flavobacteriales</taxon>
        <taxon>Flavobacteriaceae</taxon>
        <taxon>Zobellia</taxon>
    </lineage>
</organism>
<dbReference type="EC" id="3.2.1.178"/>
<dbReference type="EMBL" id="FQ073837">
    <property type="protein sequence ID" value="CBM41181.1"/>
    <property type="molecule type" value="Genomic_DNA"/>
</dbReference>
<dbReference type="EMBL" id="FP476056">
    <property type="protein sequence ID" value="CAZ95074.1"/>
    <property type="molecule type" value="Genomic_DNA"/>
</dbReference>
<dbReference type="RefSeq" id="WP_013992386.1">
    <property type="nucleotide sequence ID" value="NC_015844.1"/>
</dbReference>
<dbReference type="PDB" id="3JUU">
    <property type="method" value="X-ray"/>
    <property type="resolution" value="1.80 A"/>
    <property type="chains" value="A/B=22-293"/>
</dbReference>
<dbReference type="PDBsum" id="3JUU"/>
<dbReference type="SMR" id="D7GXF9"/>
<dbReference type="STRING" id="63186.ZOBELLIA_1017"/>
<dbReference type="CAZy" id="GH16">
    <property type="family name" value="Glycoside Hydrolase Family 16"/>
</dbReference>
<dbReference type="KEGG" id="zga:ZOBELLIA_1017"/>
<dbReference type="PATRIC" id="fig|63186.3.peg.1000"/>
<dbReference type="HOGENOM" id="CLU_053494_0_0_10"/>
<dbReference type="OrthoDB" id="657277at2"/>
<dbReference type="BioCyc" id="MetaCyc:MONOMER-16646"/>
<dbReference type="BRENDA" id="3.2.1.178">
    <property type="organism ID" value="7557"/>
</dbReference>
<dbReference type="EvolutionaryTrace" id="D7GXF9"/>
<dbReference type="Proteomes" id="UP000008898">
    <property type="component" value="Chromosome"/>
</dbReference>
<dbReference type="GO" id="GO:0042597">
    <property type="term" value="C:periplasmic space"/>
    <property type="evidence" value="ECO:0007669"/>
    <property type="project" value="UniProtKB-SubCell"/>
</dbReference>
<dbReference type="GO" id="GO:0004553">
    <property type="term" value="F:hydrolase activity, hydrolyzing O-glycosyl compounds"/>
    <property type="evidence" value="ECO:0000314"/>
    <property type="project" value="UniProtKB"/>
</dbReference>
<dbReference type="GO" id="GO:0005975">
    <property type="term" value="P:carbohydrate metabolic process"/>
    <property type="evidence" value="ECO:0000314"/>
    <property type="project" value="UniProtKB"/>
</dbReference>
<dbReference type="Gene3D" id="2.60.120.200">
    <property type="match status" value="1"/>
</dbReference>
<dbReference type="InterPro" id="IPR013320">
    <property type="entry name" value="ConA-like_dom_sf"/>
</dbReference>
<dbReference type="InterPro" id="IPR000757">
    <property type="entry name" value="GH16"/>
</dbReference>
<dbReference type="Pfam" id="PF00722">
    <property type="entry name" value="Glyco_hydro_16"/>
    <property type="match status" value="1"/>
</dbReference>
<dbReference type="SUPFAM" id="SSF49899">
    <property type="entry name" value="Concanavalin A-like lectins/glucanases"/>
    <property type="match status" value="1"/>
</dbReference>
<dbReference type="PROSITE" id="PS51762">
    <property type="entry name" value="GH16_2"/>
    <property type="match status" value="1"/>
</dbReference>
<proteinExistence type="evidence at protein level"/>
<feature type="signal peptide" evidence="3">
    <location>
        <begin position="1"/>
        <end position="21"/>
    </location>
</feature>
<feature type="chain" id="PRO_0000422021" description="Beta-porphyranase B">
    <location>
        <begin position="22"/>
        <end position="293"/>
    </location>
</feature>
<feature type="domain" description="GH16" evidence="4">
    <location>
        <begin position="38"/>
        <end position="291"/>
    </location>
</feature>
<feature type="active site" description="Nucleophile" evidence="2">
    <location>
        <position position="156"/>
    </location>
</feature>
<feature type="active site" description="Proton donor" evidence="2">
    <location>
        <position position="161"/>
    </location>
</feature>
<feature type="binding site" evidence="1">
    <location>
        <position position="67"/>
    </location>
    <ligand>
        <name>substrate</name>
    </ligand>
</feature>
<feature type="binding site" evidence="1">
    <location>
        <position position="70"/>
    </location>
    <ligand>
        <name>substrate</name>
    </ligand>
</feature>
<feature type="binding site" evidence="1">
    <location>
        <position position="156"/>
    </location>
    <ligand>
        <name>substrate</name>
    </ligand>
</feature>
<feature type="binding site" evidence="1">
    <location>
        <position position="161"/>
    </location>
    <ligand>
        <name>substrate</name>
    </ligand>
</feature>
<feature type="binding site" evidence="1">
    <location>
        <position position="256"/>
    </location>
    <ligand>
        <name>substrate</name>
    </ligand>
</feature>
<feature type="strand" evidence="8">
    <location>
        <begin position="39"/>
        <end position="42"/>
    </location>
</feature>
<feature type="helix" evidence="8">
    <location>
        <begin position="44"/>
        <end position="46"/>
    </location>
</feature>
<feature type="strand" evidence="8">
    <location>
        <begin position="52"/>
        <end position="54"/>
    </location>
</feature>
<feature type="turn" evidence="8">
    <location>
        <begin position="57"/>
        <end position="59"/>
    </location>
</feature>
<feature type="strand" evidence="8">
    <location>
        <begin position="73"/>
        <end position="75"/>
    </location>
</feature>
<feature type="helix" evidence="8">
    <location>
        <begin position="77"/>
        <end position="79"/>
    </location>
</feature>
<feature type="strand" evidence="8">
    <location>
        <begin position="80"/>
        <end position="83"/>
    </location>
</feature>
<feature type="strand" evidence="8">
    <location>
        <begin position="86"/>
        <end position="90"/>
    </location>
</feature>
<feature type="strand" evidence="8">
    <location>
        <begin position="92"/>
        <end position="100"/>
    </location>
</feature>
<feature type="strand" evidence="8">
    <location>
        <begin position="103"/>
        <end position="116"/>
    </location>
</feature>
<feature type="strand" evidence="8">
    <location>
        <begin position="118"/>
        <end position="128"/>
    </location>
</feature>
<feature type="strand" evidence="8">
    <location>
        <begin position="131"/>
        <end position="141"/>
    </location>
</feature>
<feature type="helix" evidence="8">
    <location>
        <begin position="144"/>
        <end position="146"/>
    </location>
</feature>
<feature type="helix" evidence="8">
    <location>
        <begin position="149"/>
        <end position="152"/>
    </location>
</feature>
<feature type="strand" evidence="8">
    <location>
        <begin position="153"/>
        <end position="165"/>
    </location>
</feature>
<feature type="helix" evidence="8">
    <location>
        <begin position="171"/>
        <end position="173"/>
    </location>
</feature>
<feature type="helix" evidence="8">
    <location>
        <begin position="176"/>
        <end position="178"/>
    </location>
</feature>
<feature type="strand" evidence="8">
    <location>
        <begin position="179"/>
        <end position="187"/>
    </location>
</feature>
<feature type="strand" evidence="8">
    <location>
        <begin position="202"/>
        <end position="205"/>
    </location>
</feature>
<feature type="turn" evidence="8">
    <location>
        <begin position="210"/>
        <end position="212"/>
    </location>
</feature>
<feature type="strand" evidence="8">
    <location>
        <begin position="215"/>
        <end position="223"/>
    </location>
</feature>
<feature type="strand" evidence="8">
    <location>
        <begin position="226"/>
        <end position="231"/>
    </location>
</feature>
<feature type="strand" evidence="8">
    <location>
        <begin position="234"/>
        <end position="239"/>
    </location>
</feature>
<feature type="strand" evidence="8">
    <location>
        <begin position="249"/>
        <end position="255"/>
    </location>
</feature>
<feature type="helix" evidence="8">
    <location>
        <begin position="273"/>
        <end position="276"/>
    </location>
</feature>
<feature type="strand" evidence="8">
    <location>
        <begin position="277"/>
        <end position="289"/>
    </location>
</feature>
<sequence length="293" mass="33622">MKLSNQFLITITLLITSITFAQEAPHFKPGEDPRQPHQEWKLIENMSDEFEGKKIDEKKWQISGQGWIGRAPGLFLAENISLNNGSLQITTTMLPEPIVKNNKTYTHGGGYVGSRNGMTYGYYECEMKANKTFMSSTFWLINEGKDRLGCDKRTTELDIQESVGQITNDADWMKYFDQTMNSNTHSRNIPEGCEYEKGSSKGKAELGGKAYEDFHVYGVWWKSKDEIIFFLDGKMQSKVTPPADFDIEMYLRMVVETYDWNPVPKDGGMTGSKEDRTTTYNWVRSWQLVDSKN</sequence>
<name>PORB_ZOBGA</name>
<reference key="1">
    <citation type="journal article" date="2010" name="Nature">
        <title>Transfer of carbohydrate-active enzymes from marine bacteria to Japanese gut microbiota.</title>
        <authorList>
            <person name="Hehemann J.H."/>
            <person name="Correc G."/>
            <person name="Barbeyron T."/>
            <person name="Helbert W."/>
            <person name="Czjzek M."/>
            <person name="Michel G."/>
        </authorList>
    </citation>
    <scope>NUCLEOTIDE SEQUENCE [GENOMIC DNA]</scope>
    <scope>X-RAY CRYSTALLOGRAPHY (1.80 ANGSTROMS) OF 46-293</scope>
    <scope>FUNCTION</scope>
    <scope>CATALYTIC ACTIVITY</scope>
    <source>
        <strain>DSM 12802 / CCUG 47099 / CIP 106680 / KCTC 12921 / NCIMB 13871 / Dsij</strain>
    </source>
</reference>
<reference key="2">
    <citation type="submission" date="2009-07" db="EMBL/GenBank/DDBJ databases">
        <title>Complete genome sequence of Zobellia galactanivorans Dsij.</title>
        <authorList>
            <consortium name="Genoscope - CEA"/>
        </authorList>
    </citation>
    <scope>NUCLEOTIDE SEQUENCE [LARGE SCALE GENOMIC DNA]</scope>
    <source>
        <strain>DSM 12802 / CCUG 47099 / CIP 106680 / KCTC 12921 / NCIMB 13871 / Dsij</strain>
    </source>
</reference>
<reference key="3">
    <citation type="journal article" date="2012" name="J. Biol. Chem.">
        <title>Biochemical and structural characterization of the complex agarolytic enzyme system from the marine bacterium Zobellia galactanivorans.</title>
        <authorList>
            <person name="Hehemann J.H."/>
            <person name="Correc G."/>
            <person name="Thomas F."/>
            <person name="Bernard T."/>
            <person name="Barbeyron T."/>
            <person name="Jam M."/>
            <person name="Helbert W."/>
            <person name="Michel G."/>
            <person name="Czjzek M."/>
        </authorList>
    </citation>
    <scope>FUNCTION</scope>
    <source>
        <strain>DSM 12802 / CCUG 47099 / CIP 106680 / KCTC 12921 / NCIMB 13871 / Dsij</strain>
    </source>
</reference>
<evidence type="ECO:0000250" key="1">
    <source>
        <dbReference type="UniProtKB" id="D7GXG0"/>
    </source>
</evidence>
<evidence type="ECO:0000250" key="2">
    <source>
        <dbReference type="UniProtKB" id="G0L322"/>
    </source>
</evidence>
<evidence type="ECO:0000255" key="3"/>
<evidence type="ECO:0000255" key="4">
    <source>
        <dbReference type="PROSITE-ProRule" id="PRU01098"/>
    </source>
</evidence>
<evidence type="ECO:0000269" key="5">
    <source>
    </source>
</evidence>
<evidence type="ECO:0000269" key="6">
    <source>
    </source>
</evidence>
<evidence type="ECO:0000305" key="7"/>
<evidence type="ECO:0007829" key="8">
    <source>
        <dbReference type="PDB" id="3JUU"/>
    </source>
</evidence>
<protein>
    <recommendedName>
        <fullName>Beta-porphyranase B</fullName>
        <ecNumber>3.2.1.178</ecNumber>
    </recommendedName>
</protein>
<accession>D7GXF9</accession>
<accession>D5MNX6</accession>
<comment type="function">
    <text evidence="5 6">Cleaves the sulfated polysaccharide porphyran at the (1-&gt;4) linkages between beta-D-galactopyranose and alpha-L-galactopyranose-6-sulfate, forming mostly the disaccharide alpha-L-galactopyranose-6-sulfate-(1-&gt;3)-beta-D-galactose. Some longer oligosaccharides of even number of residues are also observed. Inactive on the non-sulfated agarose portion of the porphyran backbone. In contrast to PorA, tolerates the presence of 3-6-anhydro-L-galactose in subsite -2.</text>
</comment>
<comment type="catalytic activity">
    <reaction evidence="5">
        <text>Hydrolysis of beta-D-galactopyranose-(1-&gt;4)-alpha-L-galactopyranose-6-sulfate linkages in porphyran.</text>
        <dbReference type="EC" id="3.2.1.178"/>
    </reaction>
</comment>
<comment type="subcellular location">
    <subcellularLocation>
        <location evidence="7">Periplasm</location>
    </subcellularLocation>
</comment>
<comment type="similarity">
    <text evidence="7">Belongs to the glycosyl hydrolase 16 family.</text>
</comment>
<keyword id="KW-0002">3D-structure</keyword>
<keyword id="KW-0326">Glycosidase</keyword>
<keyword id="KW-0378">Hydrolase</keyword>
<keyword id="KW-0574">Periplasm</keyword>
<keyword id="KW-1185">Reference proteome</keyword>
<keyword id="KW-0732">Signal</keyword>
<gene>
    <name type="primary">porB</name>
    <name type="ordered locus">zobellia_1017</name>
</gene>